<accession>Q8BDD6</accession>
<proteinExistence type="inferred from homology"/>
<sequence length="414" mass="46290">METLQARFDAVQEQLLEIYEQDTSSLDVQITYWTLIRHEQALYYYARRQGILRLGIYQVPPTGVSEKKAKDAIKMTLFLKSLQKSEFAAQPWSLPETSLERFLAAPENTFKKRGQHVTVIYDKDSMNAMEYTLWTEIYAVDDNDQWHKYTSGVDYDGIYFTDAQGNKNYYVSFADDAALYSKLGHWEVQYENQVLSPPVTSSLPPGPNRRRGPQTRGHPRHKSASFRRSASSGSDTRDSRGRSRSPSSSRSRSRSRSRSPSGSHSRPRAPHVPDQETGRPPGGGGRRGSRDQQQGPGGPAPPSPGEVGTRSGPPETKAKGRLAELISAAYDPPVLLLQGCANTLKSFRRRTTQSYPHTFLCMSTSWTWASKTCTVKSGHRMLVAFVNSEQRTLFLATVKIPKGVTCLKGSFDGL</sequence>
<organism>
    <name type="scientific">Bovine papillomavirus type 3</name>
    <dbReference type="NCBI Taxonomy" id="2758957"/>
    <lineage>
        <taxon>Viruses</taxon>
        <taxon>Monodnaviria</taxon>
        <taxon>Shotokuvirae</taxon>
        <taxon>Cossaviricota</taxon>
        <taxon>Papovaviricetes</taxon>
        <taxon>Zurhausenvirales</taxon>
        <taxon>Papillomaviridae</taxon>
        <taxon>Firstpapillomavirinae</taxon>
        <taxon>Xipapillomavirus</taxon>
        <taxon>Xipapillomavirus 1</taxon>
    </lineage>
</organism>
<keyword id="KW-0010">Activator</keyword>
<keyword id="KW-0235">DNA replication</keyword>
<keyword id="KW-0238">DNA-binding</keyword>
<keyword id="KW-0244">Early protein</keyword>
<keyword id="KW-1048">Host nucleus</keyword>
<keyword id="KW-0597">Phosphoprotein</keyword>
<keyword id="KW-1185">Reference proteome</keyword>
<keyword id="KW-0678">Repressor</keyword>
<keyword id="KW-0804">Transcription</keyword>
<keyword id="KW-0805">Transcription regulation</keyword>
<feature type="chain" id="PRO_0000133174" description="Regulatory protein E2">
    <location>
        <begin position="1"/>
        <end position="414"/>
    </location>
</feature>
<feature type="region of interest" description="Transactivation domain" evidence="1">
    <location>
        <begin position="1"/>
        <end position="202"/>
    </location>
</feature>
<feature type="region of interest" description="Disordered" evidence="2">
    <location>
        <begin position="196"/>
        <end position="317"/>
    </location>
</feature>
<feature type="region of interest" description="DNA-binding domain" evidence="1">
    <location>
        <begin position="331"/>
        <end position="414"/>
    </location>
</feature>
<feature type="compositionally biased region" description="Basic residues" evidence="2">
    <location>
        <begin position="208"/>
        <end position="225"/>
    </location>
</feature>
<gene>
    <name evidence="1" type="primary">E2</name>
</gene>
<comment type="function">
    <text evidence="1">Plays a role in the initiation of viral DNA replication. A dimer of E2 interacts with a dimer of E1 in order to improve specificity of E1 DNA binding activity. Once the complex recognizes and binds DNA at specific sites, the E2 dimer is removed from DNA. E2 also regulates viral transcription through binding to the E2RE response element (5'-ACCNNNNNNGGT-3') present in multiple copies in the regulatory regions of the viral genome. Activates or represses transcription depending on E2RE's position with regards to proximal promoter elements including the TATA-box. Repression occurs by sterically hindering the assembly of the transcription initiation complex.</text>
</comment>
<comment type="subunit">
    <text evidence="1">Binds DNA as homodimer. Interacts with protein E1; this interaction greatly increases E1 DNA-binding activity. Interacts with protein L1; this interaction enhances E2-dependent replication and transcription activation. Interacts with protein L2; this interaction inhibits E2 transcriptional activity but not DNA replication function E2. Interacts with protein E7; this interaction inhibits E7 oncogenic activity. Interacts with host TAF1; this interaction modulates E2-dependent transcriptional regulation. Interacts with host BRD4; this interaction mediates E2 transcriptional activation function. Additionally, the interaction with host BRD4 on mitotic chromosomes mediates tethering of the viral genome. Interacts with host TOPBP1; this interaction is required for optimal viral DNA replication.</text>
</comment>
<comment type="subcellular location">
    <subcellularLocation>
        <location evidence="1">Host nucleus</location>
    </subcellularLocation>
</comment>
<comment type="PTM">
    <text evidence="1">Phosphorylated.</text>
</comment>
<comment type="similarity">
    <text evidence="1">Belongs to the papillomaviridae E2 protein family.</text>
</comment>
<dbReference type="EMBL" id="AF486184">
    <property type="protein sequence ID" value="AAN09958.1"/>
    <property type="molecule type" value="Genomic_DNA"/>
</dbReference>
<dbReference type="EMBL" id="AJ620207">
    <property type="protein sequence ID" value="CAF05680.1"/>
    <property type="molecule type" value="Genomic_DNA"/>
</dbReference>
<dbReference type="RefSeq" id="NP_694448.1">
    <property type="nucleotide sequence ID" value="NC_004197.1"/>
</dbReference>
<dbReference type="SMR" id="Q8BDD6"/>
<dbReference type="GeneID" id="955387"/>
<dbReference type="KEGG" id="vg:955387"/>
<dbReference type="Proteomes" id="UP000006369">
    <property type="component" value="Genome"/>
</dbReference>
<dbReference type="Proteomes" id="UP000185274">
    <property type="component" value="Segment"/>
</dbReference>
<dbReference type="GO" id="GO:0042025">
    <property type="term" value="C:host cell nucleus"/>
    <property type="evidence" value="ECO:0007669"/>
    <property type="project" value="UniProtKB-SubCell"/>
</dbReference>
<dbReference type="GO" id="GO:0003677">
    <property type="term" value="F:DNA binding"/>
    <property type="evidence" value="ECO:0007669"/>
    <property type="project" value="UniProtKB-UniRule"/>
</dbReference>
<dbReference type="GO" id="GO:0003700">
    <property type="term" value="F:DNA-binding transcription factor activity"/>
    <property type="evidence" value="ECO:0007669"/>
    <property type="project" value="UniProtKB-UniRule"/>
</dbReference>
<dbReference type="GO" id="GO:0000166">
    <property type="term" value="F:nucleotide binding"/>
    <property type="evidence" value="ECO:0007669"/>
    <property type="project" value="UniProtKB-UniRule"/>
</dbReference>
<dbReference type="GO" id="GO:0006260">
    <property type="term" value="P:DNA replication"/>
    <property type="evidence" value="ECO:0007669"/>
    <property type="project" value="UniProtKB-KW"/>
</dbReference>
<dbReference type="GO" id="GO:0006351">
    <property type="term" value="P:DNA-templated transcription"/>
    <property type="evidence" value="ECO:0007669"/>
    <property type="project" value="UniProtKB-UniRule"/>
</dbReference>
<dbReference type="GO" id="GO:0006275">
    <property type="term" value="P:regulation of DNA replication"/>
    <property type="evidence" value="ECO:0007669"/>
    <property type="project" value="UniProtKB-UniRule"/>
</dbReference>
<dbReference type="GO" id="GO:0039693">
    <property type="term" value="P:viral DNA genome replication"/>
    <property type="evidence" value="ECO:0007669"/>
    <property type="project" value="UniProtKB-UniRule"/>
</dbReference>
<dbReference type="Gene3D" id="3.30.70.330">
    <property type="match status" value="1"/>
</dbReference>
<dbReference type="Gene3D" id="1.10.287.30">
    <property type="entry name" value="E2 (early) protein, N terminal domain, subdomain 1"/>
    <property type="match status" value="1"/>
</dbReference>
<dbReference type="Gene3D" id="2.170.200.10">
    <property type="entry name" value="Papillomavirus E2 early protein domain"/>
    <property type="match status" value="1"/>
</dbReference>
<dbReference type="HAMAP" id="MF_04001">
    <property type="entry name" value="PPV_E2"/>
    <property type="match status" value="1"/>
</dbReference>
<dbReference type="InterPro" id="IPR035975">
    <property type="entry name" value="E2/EBNA1_C_sf"/>
</dbReference>
<dbReference type="InterPro" id="IPR012677">
    <property type="entry name" value="Nucleotide-bd_a/b_plait_sf"/>
</dbReference>
<dbReference type="InterPro" id="IPR000427">
    <property type="entry name" value="Papillomavirus_E2_C"/>
</dbReference>
<dbReference type="InterPro" id="IPR001866">
    <property type="entry name" value="PPV_E2_N"/>
</dbReference>
<dbReference type="InterPro" id="IPR033668">
    <property type="entry name" value="Reg_prot_E2"/>
</dbReference>
<dbReference type="InterPro" id="IPR036050">
    <property type="entry name" value="Regulatory_protein_E2_N"/>
</dbReference>
<dbReference type="InterPro" id="IPR042503">
    <property type="entry name" value="Regulatory_protein_E2_N_1"/>
</dbReference>
<dbReference type="InterPro" id="IPR042504">
    <property type="entry name" value="Regulatory_protein_E2_N_2"/>
</dbReference>
<dbReference type="Pfam" id="PF00511">
    <property type="entry name" value="PPV_E2_C"/>
    <property type="match status" value="1"/>
</dbReference>
<dbReference type="Pfam" id="PF00508">
    <property type="entry name" value="PPV_E2_N"/>
    <property type="match status" value="1"/>
</dbReference>
<dbReference type="SUPFAM" id="SSF51332">
    <property type="entry name" value="E2 regulatory, transactivation domain"/>
    <property type="match status" value="1"/>
</dbReference>
<dbReference type="SUPFAM" id="SSF54957">
    <property type="entry name" value="Viral DNA-binding domain"/>
    <property type="match status" value="1"/>
</dbReference>
<reference key="1">
    <citation type="journal article" date="2002" name="J. Virol.">
        <title>Lack of canonical E6 and E7 open reading frames in bird papillomaviruses: Fringilla coelebs papillomavirus and Psittacus erithacus timneh papillomavirus.</title>
        <authorList>
            <person name="Terai M."/>
            <person name="DeSalle R."/>
            <person name="Burk R.D."/>
        </authorList>
    </citation>
    <scope>NUCLEOTIDE SEQUENCE [GENOMIC DNA]</scope>
</reference>
<reference key="2">
    <citation type="submission" date="2004-01" db="EMBL/GenBank/DDBJ databases">
        <title>Sequencing of the complete genomes of BPV 3, BPV 5 and BPV 6.</title>
        <authorList>
            <person name="Delius H."/>
            <person name="de Villiers E.M."/>
        </authorList>
    </citation>
    <scope>NUCLEOTIDE SEQUENCE [GENOMIC DNA]</scope>
</reference>
<evidence type="ECO:0000255" key="1">
    <source>
        <dbReference type="HAMAP-Rule" id="MF_04001"/>
    </source>
</evidence>
<evidence type="ECO:0000256" key="2">
    <source>
        <dbReference type="SAM" id="MobiDB-lite"/>
    </source>
</evidence>
<name>VE2_BPV3</name>
<protein>
    <recommendedName>
        <fullName evidence="1">Regulatory protein E2</fullName>
    </recommendedName>
</protein>
<organismHost>
    <name type="scientific">Bos taurus</name>
    <name type="common">Bovine</name>
    <dbReference type="NCBI Taxonomy" id="9913"/>
</organismHost>